<gene>
    <name evidence="1" type="primary">rplV</name>
    <name type="ordered locus">RHA1_ro06138</name>
</gene>
<reference key="1">
    <citation type="journal article" date="2006" name="Proc. Natl. Acad. Sci. U.S.A.">
        <title>The complete genome of Rhodococcus sp. RHA1 provides insights into a catabolic powerhouse.</title>
        <authorList>
            <person name="McLeod M.P."/>
            <person name="Warren R.L."/>
            <person name="Hsiao W.W.L."/>
            <person name="Araki N."/>
            <person name="Myhre M."/>
            <person name="Fernandes C."/>
            <person name="Miyazawa D."/>
            <person name="Wong W."/>
            <person name="Lillquist A.L."/>
            <person name="Wang D."/>
            <person name="Dosanjh M."/>
            <person name="Hara H."/>
            <person name="Petrescu A."/>
            <person name="Morin R.D."/>
            <person name="Yang G."/>
            <person name="Stott J.M."/>
            <person name="Schein J.E."/>
            <person name="Shin H."/>
            <person name="Smailus D."/>
            <person name="Siddiqui A.S."/>
            <person name="Marra M.A."/>
            <person name="Jones S.J.M."/>
            <person name="Holt R."/>
            <person name="Brinkman F.S.L."/>
            <person name="Miyauchi K."/>
            <person name="Fukuda M."/>
            <person name="Davies J.E."/>
            <person name="Mohn W.W."/>
            <person name="Eltis L.D."/>
        </authorList>
    </citation>
    <scope>NUCLEOTIDE SEQUENCE [LARGE SCALE GENOMIC DNA]</scope>
    <source>
        <strain>RHA1</strain>
    </source>
</reference>
<feature type="chain" id="PRO_1000052636" description="Large ribosomal subunit protein uL22">
    <location>
        <begin position="1"/>
        <end position="134"/>
    </location>
</feature>
<name>RL22_RHOJR</name>
<keyword id="KW-0687">Ribonucleoprotein</keyword>
<keyword id="KW-0689">Ribosomal protein</keyword>
<keyword id="KW-0694">RNA-binding</keyword>
<keyword id="KW-0699">rRNA-binding</keyword>
<accession>Q0S3H1</accession>
<evidence type="ECO:0000255" key="1">
    <source>
        <dbReference type="HAMAP-Rule" id="MF_01331"/>
    </source>
</evidence>
<evidence type="ECO:0000305" key="2"/>
<dbReference type="EMBL" id="CP000431">
    <property type="protein sequence ID" value="ABG97915.1"/>
    <property type="molecule type" value="Genomic_DNA"/>
</dbReference>
<dbReference type="RefSeq" id="WP_005239634.1">
    <property type="nucleotide sequence ID" value="NC_008268.1"/>
</dbReference>
<dbReference type="SMR" id="Q0S3H1"/>
<dbReference type="GeneID" id="69890521"/>
<dbReference type="KEGG" id="rha:RHA1_ro06138"/>
<dbReference type="eggNOG" id="COG0091">
    <property type="taxonomic scope" value="Bacteria"/>
</dbReference>
<dbReference type="HOGENOM" id="CLU_083987_3_2_11"/>
<dbReference type="OrthoDB" id="9805969at2"/>
<dbReference type="Proteomes" id="UP000008710">
    <property type="component" value="Chromosome"/>
</dbReference>
<dbReference type="GO" id="GO:0022625">
    <property type="term" value="C:cytosolic large ribosomal subunit"/>
    <property type="evidence" value="ECO:0007669"/>
    <property type="project" value="TreeGrafter"/>
</dbReference>
<dbReference type="GO" id="GO:0019843">
    <property type="term" value="F:rRNA binding"/>
    <property type="evidence" value="ECO:0007669"/>
    <property type="project" value="UniProtKB-UniRule"/>
</dbReference>
<dbReference type="GO" id="GO:0003735">
    <property type="term" value="F:structural constituent of ribosome"/>
    <property type="evidence" value="ECO:0007669"/>
    <property type="project" value="InterPro"/>
</dbReference>
<dbReference type="GO" id="GO:0006412">
    <property type="term" value="P:translation"/>
    <property type="evidence" value="ECO:0007669"/>
    <property type="project" value="UniProtKB-UniRule"/>
</dbReference>
<dbReference type="CDD" id="cd00336">
    <property type="entry name" value="Ribosomal_L22"/>
    <property type="match status" value="1"/>
</dbReference>
<dbReference type="FunFam" id="3.90.470.10:FF:000002">
    <property type="entry name" value="50S ribosomal protein L22"/>
    <property type="match status" value="1"/>
</dbReference>
<dbReference type="Gene3D" id="3.90.470.10">
    <property type="entry name" value="Ribosomal protein L22/L17"/>
    <property type="match status" value="1"/>
</dbReference>
<dbReference type="HAMAP" id="MF_01331_B">
    <property type="entry name" value="Ribosomal_uL22_B"/>
    <property type="match status" value="1"/>
</dbReference>
<dbReference type="InterPro" id="IPR001063">
    <property type="entry name" value="Ribosomal_uL22"/>
</dbReference>
<dbReference type="InterPro" id="IPR005727">
    <property type="entry name" value="Ribosomal_uL22_bac/chlpt-type"/>
</dbReference>
<dbReference type="InterPro" id="IPR047867">
    <property type="entry name" value="Ribosomal_uL22_bac/org-type"/>
</dbReference>
<dbReference type="InterPro" id="IPR018260">
    <property type="entry name" value="Ribosomal_uL22_CS"/>
</dbReference>
<dbReference type="InterPro" id="IPR036394">
    <property type="entry name" value="Ribosomal_uL22_sf"/>
</dbReference>
<dbReference type="NCBIfam" id="TIGR01044">
    <property type="entry name" value="rplV_bact"/>
    <property type="match status" value="1"/>
</dbReference>
<dbReference type="PANTHER" id="PTHR13501">
    <property type="entry name" value="CHLOROPLAST 50S RIBOSOMAL PROTEIN L22-RELATED"/>
    <property type="match status" value="1"/>
</dbReference>
<dbReference type="PANTHER" id="PTHR13501:SF8">
    <property type="entry name" value="LARGE RIBOSOMAL SUBUNIT PROTEIN UL22M"/>
    <property type="match status" value="1"/>
</dbReference>
<dbReference type="Pfam" id="PF00237">
    <property type="entry name" value="Ribosomal_L22"/>
    <property type="match status" value="1"/>
</dbReference>
<dbReference type="SUPFAM" id="SSF54843">
    <property type="entry name" value="Ribosomal protein L22"/>
    <property type="match status" value="1"/>
</dbReference>
<dbReference type="PROSITE" id="PS00464">
    <property type="entry name" value="RIBOSOMAL_L22"/>
    <property type="match status" value="1"/>
</dbReference>
<proteinExistence type="inferred from homology"/>
<comment type="function">
    <text evidence="1">This protein binds specifically to 23S rRNA; its binding is stimulated by other ribosomal proteins, e.g. L4, L17, and L20. It is important during the early stages of 50S assembly. It makes multiple contacts with different domains of the 23S rRNA in the assembled 50S subunit and ribosome (By similarity).</text>
</comment>
<comment type="function">
    <text evidence="1">The globular domain of the protein is located near the polypeptide exit tunnel on the outside of the subunit, while an extended beta-hairpin is found that lines the wall of the exit tunnel in the center of the 70S ribosome.</text>
</comment>
<comment type="subunit">
    <text evidence="1">Part of the 50S ribosomal subunit.</text>
</comment>
<comment type="similarity">
    <text evidence="1">Belongs to the universal ribosomal protein uL22 family.</text>
</comment>
<sequence>MSNTETANPTAKAVARHVRVTPMKARRVVDLVRGRSVEDALNILKFAPQAASEPVAKVIASAAANAENNLDLDPSTLVVATAFVDEGATLKRFQPRAQGRAFRIRKRTSHITVIVESLPKTGTSTRNRRKGSAQ</sequence>
<organism>
    <name type="scientific">Rhodococcus jostii (strain RHA1)</name>
    <dbReference type="NCBI Taxonomy" id="101510"/>
    <lineage>
        <taxon>Bacteria</taxon>
        <taxon>Bacillati</taxon>
        <taxon>Actinomycetota</taxon>
        <taxon>Actinomycetes</taxon>
        <taxon>Mycobacteriales</taxon>
        <taxon>Nocardiaceae</taxon>
        <taxon>Rhodococcus</taxon>
    </lineage>
</organism>
<protein>
    <recommendedName>
        <fullName evidence="1">Large ribosomal subunit protein uL22</fullName>
    </recommendedName>
    <alternativeName>
        <fullName evidence="2">50S ribosomal protein L22</fullName>
    </alternativeName>
</protein>